<sequence length="65" mass="7370">MPKLKTKSGAAKRFKKTGKGGFKHRCANRAHINTKMTTKRKRHLRGMNQVAKVDTTSLVQQMPYA</sequence>
<gene>
    <name evidence="1" type="primary">rpmI</name>
    <name type="ordered locus">FTH_1367</name>
</gene>
<reference key="1">
    <citation type="journal article" date="2006" name="J. Bacteriol.">
        <title>Chromosome rearrangement and diversification of Francisella tularensis revealed by the type B (OSU18) genome sequence.</title>
        <authorList>
            <person name="Petrosino J.F."/>
            <person name="Xiang Q."/>
            <person name="Karpathy S.E."/>
            <person name="Jiang H."/>
            <person name="Yerrapragada S."/>
            <person name="Liu Y."/>
            <person name="Gioia J."/>
            <person name="Hemphill L."/>
            <person name="Gonzalez A."/>
            <person name="Raghavan T.M."/>
            <person name="Uzman A."/>
            <person name="Fox G.E."/>
            <person name="Highlander S."/>
            <person name="Reichard M."/>
            <person name="Morton R.J."/>
            <person name="Clinkenbeard K.D."/>
            <person name="Weinstock G.M."/>
        </authorList>
    </citation>
    <scope>NUCLEOTIDE SEQUENCE [LARGE SCALE GENOMIC DNA]</scope>
    <source>
        <strain>OSU18</strain>
    </source>
</reference>
<feature type="chain" id="PRO_1000050693" description="Large ribosomal subunit protein bL35">
    <location>
        <begin position="1"/>
        <end position="65"/>
    </location>
</feature>
<feature type="region of interest" description="Disordered" evidence="2">
    <location>
        <begin position="1"/>
        <end position="23"/>
    </location>
</feature>
<feature type="region of interest" description="Disordered" evidence="2">
    <location>
        <begin position="36"/>
        <end position="65"/>
    </location>
</feature>
<feature type="compositionally biased region" description="Polar residues" evidence="2">
    <location>
        <begin position="54"/>
        <end position="65"/>
    </location>
</feature>
<evidence type="ECO:0000255" key="1">
    <source>
        <dbReference type="HAMAP-Rule" id="MF_00514"/>
    </source>
</evidence>
<evidence type="ECO:0000256" key="2">
    <source>
        <dbReference type="SAM" id="MobiDB-lite"/>
    </source>
</evidence>
<evidence type="ECO:0000305" key="3"/>
<proteinExistence type="inferred from homology"/>
<keyword id="KW-0687">Ribonucleoprotein</keyword>
<keyword id="KW-0689">Ribosomal protein</keyword>
<name>RL35_FRATO</name>
<organism>
    <name type="scientific">Francisella tularensis subsp. holarctica (strain OSU18)</name>
    <dbReference type="NCBI Taxonomy" id="393011"/>
    <lineage>
        <taxon>Bacteria</taxon>
        <taxon>Pseudomonadati</taxon>
        <taxon>Pseudomonadota</taxon>
        <taxon>Gammaproteobacteria</taxon>
        <taxon>Thiotrichales</taxon>
        <taxon>Francisellaceae</taxon>
        <taxon>Francisella</taxon>
    </lineage>
</organism>
<dbReference type="EMBL" id="CP000437">
    <property type="protein sequence ID" value="ABI83191.1"/>
    <property type="molecule type" value="Genomic_DNA"/>
</dbReference>
<dbReference type="RefSeq" id="WP_003016672.1">
    <property type="nucleotide sequence ID" value="NC_017463.1"/>
</dbReference>
<dbReference type="SMR" id="Q0BL43"/>
<dbReference type="KEGG" id="fth:FTH_1367"/>
<dbReference type="GO" id="GO:0022625">
    <property type="term" value="C:cytosolic large ribosomal subunit"/>
    <property type="evidence" value="ECO:0007669"/>
    <property type="project" value="TreeGrafter"/>
</dbReference>
<dbReference type="GO" id="GO:0003735">
    <property type="term" value="F:structural constituent of ribosome"/>
    <property type="evidence" value="ECO:0007669"/>
    <property type="project" value="InterPro"/>
</dbReference>
<dbReference type="GO" id="GO:0006412">
    <property type="term" value="P:translation"/>
    <property type="evidence" value="ECO:0007669"/>
    <property type="project" value="UniProtKB-UniRule"/>
</dbReference>
<dbReference type="FunFam" id="4.10.410.60:FF:000001">
    <property type="entry name" value="50S ribosomal protein L35"/>
    <property type="match status" value="1"/>
</dbReference>
<dbReference type="Gene3D" id="4.10.410.60">
    <property type="match status" value="1"/>
</dbReference>
<dbReference type="HAMAP" id="MF_00514">
    <property type="entry name" value="Ribosomal_bL35"/>
    <property type="match status" value="1"/>
</dbReference>
<dbReference type="InterPro" id="IPR001706">
    <property type="entry name" value="Ribosomal_bL35"/>
</dbReference>
<dbReference type="InterPro" id="IPR021137">
    <property type="entry name" value="Ribosomal_bL35-like"/>
</dbReference>
<dbReference type="InterPro" id="IPR018265">
    <property type="entry name" value="Ribosomal_bL35_CS"/>
</dbReference>
<dbReference type="InterPro" id="IPR037229">
    <property type="entry name" value="Ribosomal_bL35_sf"/>
</dbReference>
<dbReference type="NCBIfam" id="TIGR00001">
    <property type="entry name" value="rpmI_bact"/>
    <property type="match status" value="1"/>
</dbReference>
<dbReference type="PANTHER" id="PTHR33343">
    <property type="entry name" value="54S RIBOSOMAL PROTEIN BL35M"/>
    <property type="match status" value="1"/>
</dbReference>
<dbReference type="PANTHER" id="PTHR33343:SF1">
    <property type="entry name" value="LARGE RIBOSOMAL SUBUNIT PROTEIN BL35M"/>
    <property type="match status" value="1"/>
</dbReference>
<dbReference type="Pfam" id="PF01632">
    <property type="entry name" value="Ribosomal_L35p"/>
    <property type="match status" value="1"/>
</dbReference>
<dbReference type="PRINTS" id="PR00064">
    <property type="entry name" value="RIBOSOMALL35"/>
</dbReference>
<dbReference type="SUPFAM" id="SSF143034">
    <property type="entry name" value="L35p-like"/>
    <property type="match status" value="1"/>
</dbReference>
<dbReference type="PROSITE" id="PS00936">
    <property type="entry name" value="RIBOSOMAL_L35"/>
    <property type="match status" value="1"/>
</dbReference>
<protein>
    <recommendedName>
        <fullName evidence="1">Large ribosomal subunit protein bL35</fullName>
    </recommendedName>
    <alternativeName>
        <fullName evidence="3">50S ribosomal protein L35</fullName>
    </alternativeName>
</protein>
<comment type="similarity">
    <text evidence="1">Belongs to the bacterial ribosomal protein bL35 family.</text>
</comment>
<accession>Q0BL43</accession>